<feature type="chain" id="PRO_0000415504" description="Probable zinc-binding alcohol dehydrogenase Rv1895">
    <location>
        <begin position="1"/>
        <end position="384"/>
    </location>
</feature>
<feature type="binding site" evidence="1">
    <location>
        <position position="38"/>
    </location>
    <ligand>
        <name>Zn(2+)</name>
        <dbReference type="ChEBI" id="CHEBI:29105"/>
        <label>1</label>
        <note>catalytic</note>
    </ligand>
</feature>
<feature type="binding site" evidence="1">
    <location>
        <position position="59"/>
    </location>
    <ligand>
        <name>Zn(2+)</name>
        <dbReference type="ChEBI" id="CHEBI:29105"/>
        <label>1</label>
        <note>catalytic</note>
    </ligand>
</feature>
<feature type="binding site" evidence="1">
    <location>
        <position position="89"/>
    </location>
    <ligand>
        <name>Zn(2+)</name>
        <dbReference type="ChEBI" id="CHEBI:29105"/>
        <label>2</label>
    </ligand>
</feature>
<feature type="binding site" evidence="1">
    <location>
        <position position="92"/>
    </location>
    <ligand>
        <name>Zn(2+)</name>
        <dbReference type="ChEBI" id="CHEBI:29105"/>
        <label>2</label>
    </ligand>
</feature>
<feature type="binding site" evidence="1">
    <location>
        <position position="95"/>
    </location>
    <ligand>
        <name>Zn(2+)</name>
        <dbReference type="ChEBI" id="CHEBI:29105"/>
        <label>2</label>
    </ligand>
</feature>
<feature type="binding site" evidence="1">
    <location>
        <position position="103"/>
    </location>
    <ligand>
        <name>Zn(2+)</name>
        <dbReference type="ChEBI" id="CHEBI:29105"/>
        <label>2</label>
    </ligand>
</feature>
<protein>
    <recommendedName>
        <fullName>Probable zinc-binding alcohol dehydrogenase Rv1895</fullName>
        <ecNumber>1.1.1.1</ecNumber>
    </recommendedName>
</protein>
<organism>
    <name type="scientific">Mycobacterium tuberculosis (strain ATCC 25618 / H37Rv)</name>
    <dbReference type="NCBI Taxonomy" id="83332"/>
    <lineage>
        <taxon>Bacteria</taxon>
        <taxon>Bacillati</taxon>
        <taxon>Actinomycetota</taxon>
        <taxon>Actinomycetes</taxon>
        <taxon>Mycobacteriales</taxon>
        <taxon>Mycobacteriaceae</taxon>
        <taxon>Mycobacterium</taxon>
        <taxon>Mycobacterium tuberculosis complex</taxon>
    </lineage>
</organism>
<reference key="1">
    <citation type="journal article" date="1998" name="Nature">
        <title>Deciphering the biology of Mycobacterium tuberculosis from the complete genome sequence.</title>
        <authorList>
            <person name="Cole S.T."/>
            <person name="Brosch R."/>
            <person name="Parkhill J."/>
            <person name="Garnier T."/>
            <person name="Churcher C.M."/>
            <person name="Harris D.E."/>
            <person name="Gordon S.V."/>
            <person name="Eiglmeier K."/>
            <person name="Gas S."/>
            <person name="Barry C.E. III"/>
            <person name="Tekaia F."/>
            <person name="Badcock K."/>
            <person name="Basham D."/>
            <person name="Brown D."/>
            <person name="Chillingworth T."/>
            <person name="Connor R."/>
            <person name="Davies R.M."/>
            <person name="Devlin K."/>
            <person name="Feltwell T."/>
            <person name="Gentles S."/>
            <person name="Hamlin N."/>
            <person name="Holroyd S."/>
            <person name="Hornsby T."/>
            <person name="Jagels K."/>
            <person name="Krogh A."/>
            <person name="McLean J."/>
            <person name="Moule S."/>
            <person name="Murphy L.D."/>
            <person name="Oliver S."/>
            <person name="Osborne J."/>
            <person name="Quail M.A."/>
            <person name="Rajandream M.A."/>
            <person name="Rogers J."/>
            <person name="Rutter S."/>
            <person name="Seeger K."/>
            <person name="Skelton S."/>
            <person name="Squares S."/>
            <person name="Squares R."/>
            <person name="Sulston J.E."/>
            <person name="Taylor K."/>
            <person name="Whitehead S."/>
            <person name="Barrell B.G."/>
        </authorList>
    </citation>
    <scope>NUCLEOTIDE SEQUENCE [LARGE SCALE GENOMIC DNA]</scope>
    <source>
        <strain>ATCC 25618 / H37Rv</strain>
    </source>
</reference>
<reference key="2">
    <citation type="journal article" date="2011" name="Mol. Cell. Proteomics">
        <title>Proteogenomic analysis of Mycobacterium tuberculosis by high resolution mass spectrometry.</title>
        <authorList>
            <person name="Kelkar D.S."/>
            <person name="Kumar D."/>
            <person name="Kumar P."/>
            <person name="Balakrishnan L."/>
            <person name="Muthusamy B."/>
            <person name="Yadav A.K."/>
            <person name="Shrivastava P."/>
            <person name="Marimuthu A."/>
            <person name="Anand S."/>
            <person name="Sundaram H."/>
            <person name="Kingsbury R."/>
            <person name="Harsha H.C."/>
            <person name="Nair B."/>
            <person name="Prasad T.S."/>
            <person name="Chauhan D.S."/>
            <person name="Katoch K."/>
            <person name="Katoch V.M."/>
            <person name="Kumar P."/>
            <person name="Chaerkady R."/>
            <person name="Ramachandran S."/>
            <person name="Dash D."/>
            <person name="Pandey A."/>
        </authorList>
    </citation>
    <scope>IDENTIFICATION BY MASS SPECTROMETRY [LARGE SCALE ANALYSIS]</scope>
    <source>
        <strain>ATCC 25618 / H37Rv</strain>
    </source>
</reference>
<accession>O07737</accession>
<accession>L0T807</accession>
<sequence length="384" mass="39479">MRAVVIDGAGSVRVNTQPDPALPGPDGVVVAVTAAGICGSDLHFYEGEYPFTEPVALGHEAVGTIVEAGPQVRTVGVGDLVMVSSVAGCGVCPGCETHDPVMCFSGPMIFGAGVLGGAQADLLAVPAADFQVLKIPEGITTEQALLLTDNLATGWAAAQRADISFGSAVAVIGLGAVGLCALRSAFIHGAATVFAVDRVKGRLQRAATWGATPIPSPAAETILAATRGRGADSVIDAVGTDASMSDALNAVRPGGTVSVVGVHDLQPFPVPALTCLLRSITLRMTMAPVQRTWPELIPLLQSGRLDVDGIFTTTLPLDEAAKGYATARARSGEELRFCLRPDSRDVLGAHETVDLYVHVRRCQSVADLQLEGAADGVDGPSMLN</sequence>
<name>Y1895_MYCTU</name>
<dbReference type="EC" id="1.1.1.1"/>
<dbReference type="EMBL" id="AL123456">
    <property type="protein sequence ID" value="CCP44662.1"/>
    <property type="molecule type" value="Genomic_DNA"/>
</dbReference>
<dbReference type="PIR" id="D70517">
    <property type="entry name" value="D70517"/>
</dbReference>
<dbReference type="RefSeq" id="NP_216411.1">
    <property type="nucleotide sequence ID" value="NC_000962.3"/>
</dbReference>
<dbReference type="RefSeq" id="WP_003911674.1">
    <property type="nucleotide sequence ID" value="NC_000962.3"/>
</dbReference>
<dbReference type="SMR" id="O07737"/>
<dbReference type="FunCoup" id="O07737">
    <property type="interactions" value="153"/>
</dbReference>
<dbReference type="STRING" id="83332.Rv1895"/>
<dbReference type="PaxDb" id="83332-Rv1895"/>
<dbReference type="DNASU" id="885148"/>
<dbReference type="GeneID" id="885148"/>
<dbReference type="KEGG" id="mtu:Rv1895"/>
<dbReference type="KEGG" id="mtv:RVBD_1895"/>
<dbReference type="PATRIC" id="fig|83332.111.peg.2109"/>
<dbReference type="TubercuList" id="Rv1895"/>
<dbReference type="eggNOG" id="COG1063">
    <property type="taxonomic scope" value="Bacteria"/>
</dbReference>
<dbReference type="InParanoid" id="O07737"/>
<dbReference type="OrthoDB" id="241504at2"/>
<dbReference type="PhylomeDB" id="O07737"/>
<dbReference type="Proteomes" id="UP000001584">
    <property type="component" value="Chromosome"/>
</dbReference>
<dbReference type="GO" id="GO:0004022">
    <property type="term" value="F:alcohol dehydrogenase (NAD+) activity"/>
    <property type="evidence" value="ECO:0007669"/>
    <property type="project" value="UniProtKB-EC"/>
</dbReference>
<dbReference type="GO" id="GO:0008270">
    <property type="term" value="F:zinc ion binding"/>
    <property type="evidence" value="ECO:0007669"/>
    <property type="project" value="InterPro"/>
</dbReference>
<dbReference type="CDD" id="cd08284">
    <property type="entry name" value="FDH_like_2"/>
    <property type="match status" value="1"/>
</dbReference>
<dbReference type="Gene3D" id="3.90.180.10">
    <property type="entry name" value="Medium-chain alcohol dehydrogenases, catalytic domain"/>
    <property type="match status" value="1"/>
</dbReference>
<dbReference type="Gene3D" id="3.40.50.720">
    <property type="entry name" value="NAD(P)-binding Rossmann-like Domain"/>
    <property type="match status" value="1"/>
</dbReference>
<dbReference type="InterPro" id="IPR013149">
    <property type="entry name" value="ADH-like_C"/>
</dbReference>
<dbReference type="InterPro" id="IPR013154">
    <property type="entry name" value="ADH-like_N"/>
</dbReference>
<dbReference type="InterPro" id="IPR002328">
    <property type="entry name" value="ADH_Zn_CS"/>
</dbReference>
<dbReference type="InterPro" id="IPR011032">
    <property type="entry name" value="GroES-like_sf"/>
</dbReference>
<dbReference type="InterPro" id="IPR036291">
    <property type="entry name" value="NAD(P)-bd_dom_sf"/>
</dbReference>
<dbReference type="InterPro" id="IPR020843">
    <property type="entry name" value="PKS_ER"/>
</dbReference>
<dbReference type="PANTHER" id="PTHR42813:SF2">
    <property type="entry name" value="DEHYDROGENASE, ZINC-CONTAINING, PUTATIVE (AFU_ORTHOLOGUE AFUA_2G02810)-RELATED"/>
    <property type="match status" value="1"/>
</dbReference>
<dbReference type="PANTHER" id="PTHR42813">
    <property type="entry name" value="ZINC-TYPE ALCOHOL DEHYDROGENASE-LIKE"/>
    <property type="match status" value="1"/>
</dbReference>
<dbReference type="Pfam" id="PF08240">
    <property type="entry name" value="ADH_N"/>
    <property type="match status" value="1"/>
</dbReference>
<dbReference type="Pfam" id="PF00107">
    <property type="entry name" value="ADH_zinc_N"/>
    <property type="match status" value="1"/>
</dbReference>
<dbReference type="SMART" id="SM00829">
    <property type="entry name" value="PKS_ER"/>
    <property type="match status" value="1"/>
</dbReference>
<dbReference type="SUPFAM" id="SSF50129">
    <property type="entry name" value="GroES-like"/>
    <property type="match status" value="1"/>
</dbReference>
<dbReference type="SUPFAM" id="SSF51735">
    <property type="entry name" value="NAD(P)-binding Rossmann-fold domains"/>
    <property type="match status" value="1"/>
</dbReference>
<dbReference type="PROSITE" id="PS00059">
    <property type="entry name" value="ADH_ZINC"/>
    <property type="match status" value="1"/>
</dbReference>
<gene>
    <name type="ordered locus">Rv1895</name>
</gene>
<keyword id="KW-0479">Metal-binding</keyword>
<keyword id="KW-0520">NAD</keyword>
<keyword id="KW-0560">Oxidoreductase</keyword>
<keyword id="KW-1185">Reference proteome</keyword>
<keyword id="KW-0862">Zinc</keyword>
<comment type="catalytic activity">
    <reaction>
        <text>a primary alcohol + NAD(+) = an aldehyde + NADH + H(+)</text>
        <dbReference type="Rhea" id="RHEA:10736"/>
        <dbReference type="ChEBI" id="CHEBI:15378"/>
        <dbReference type="ChEBI" id="CHEBI:15734"/>
        <dbReference type="ChEBI" id="CHEBI:17478"/>
        <dbReference type="ChEBI" id="CHEBI:57540"/>
        <dbReference type="ChEBI" id="CHEBI:57945"/>
        <dbReference type="EC" id="1.1.1.1"/>
    </reaction>
</comment>
<comment type="catalytic activity">
    <reaction>
        <text>a secondary alcohol + NAD(+) = a ketone + NADH + H(+)</text>
        <dbReference type="Rhea" id="RHEA:10740"/>
        <dbReference type="ChEBI" id="CHEBI:15378"/>
        <dbReference type="ChEBI" id="CHEBI:17087"/>
        <dbReference type="ChEBI" id="CHEBI:35681"/>
        <dbReference type="ChEBI" id="CHEBI:57540"/>
        <dbReference type="ChEBI" id="CHEBI:57945"/>
        <dbReference type="EC" id="1.1.1.1"/>
    </reaction>
</comment>
<comment type="cofactor">
    <cofactor evidence="1">
        <name>Zn(2+)</name>
        <dbReference type="ChEBI" id="CHEBI:29105"/>
    </cofactor>
    <text evidence="1">Binds 2 Zn(2+) ions per subunit.</text>
</comment>
<comment type="similarity">
    <text evidence="2">Belongs to the zinc-containing alcohol dehydrogenase family.</text>
</comment>
<proteinExistence type="evidence at protein level"/>
<evidence type="ECO:0000250" key="1"/>
<evidence type="ECO:0000305" key="2"/>